<feature type="signal peptide" evidence="1">
    <location>
        <begin position="1"/>
        <end position="21"/>
    </location>
</feature>
<feature type="chain" id="PRO_0000236835" description="Flagellar L-ring protein">
    <location>
        <begin position="22"/>
        <end position="232"/>
    </location>
</feature>
<feature type="lipid moiety-binding region" description="N-palmitoyl cysteine" evidence="1">
    <location>
        <position position="22"/>
    </location>
</feature>
<feature type="lipid moiety-binding region" description="S-diacylglycerol cysteine" evidence="1">
    <location>
        <position position="22"/>
    </location>
</feature>
<sequence>MQKNAAHTYAISSLLVLSLTGCAWIPSTPLVQGATSAQPVLGPTPVANGSIFQSAQPINYGYQPLFEDRRPRNIGDTLTIVLQENVSASKSSSANASRDGKTNFGFDTVPRYLQGLFGNARADVEASGGNTFNGKGGANASNTFSGTLTVTVDQVLVNGNLHVVGEKQIAINQGTEFIRFSGVVNPRTISGSNTVPSTQVADARIEYVGNGYINEAQNMGWLQRFFLNLSPM</sequence>
<proteinExistence type="inferred from homology"/>
<reference key="1">
    <citation type="journal article" date="2005" name="Nucleic Acids Res.">
        <title>Genome dynamics and diversity of Shigella species, the etiologic agents of bacillary dysentery.</title>
        <authorList>
            <person name="Yang F."/>
            <person name="Yang J."/>
            <person name="Zhang X."/>
            <person name="Chen L."/>
            <person name="Jiang Y."/>
            <person name="Yan Y."/>
            <person name="Tang X."/>
            <person name="Wang J."/>
            <person name="Xiong Z."/>
            <person name="Dong J."/>
            <person name="Xue Y."/>
            <person name="Zhu Y."/>
            <person name="Xu X."/>
            <person name="Sun L."/>
            <person name="Chen S."/>
            <person name="Nie H."/>
            <person name="Peng J."/>
            <person name="Xu J."/>
            <person name="Wang Y."/>
            <person name="Yuan Z."/>
            <person name="Wen Y."/>
            <person name="Yao Z."/>
            <person name="Shen Y."/>
            <person name="Qiang B."/>
            <person name="Hou Y."/>
            <person name="Yu J."/>
            <person name="Jin Q."/>
        </authorList>
    </citation>
    <scope>NUCLEOTIDE SEQUENCE [LARGE SCALE GENOMIC DNA]</scope>
    <source>
        <strain>Sd197</strain>
    </source>
</reference>
<protein>
    <recommendedName>
        <fullName evidence="1">Flagellar L-ring protein</fullName>
    </recommendedName>
    <alternativeName>
        <fullName evidence="1">Basal body L-ring protein</fullName>
    </alternativeName>
</protein>
<accession>Q32ET9</accession>
<evidence type="ECO:0000255" key="1">
    <source>
        <dbReference type="HAMAP-Rule" id="MF_00415"/>
    </source>
</evidence>
<comment type="function">
    <text evidence="1">Assembles around the rod to form the L-ring and probably protects the motor/basal body from shearing forces during rotation.</text>
</comment>
<comment type="subunit">
    <text evidence="1">The basal body constitutes a major portion of the flagellar organelle and consists of four rings (L,P,S, and M) mounted on a central rod.</text>
</comment>
<comment type="subcellular location">
    <subcellularLocation>
        <location evidence="1">Cell outer membrane</location>
        <topology evidence="1">Lipid-anchor</topology>
    </subcellularLocation>
    <subcellularLocation>
        <location evidence="1">Bacterial flagellum basal body</location>
    </subcellularLocation>
</comment>
<comment type="similarity">
    <text evidence="1">Belongs to the FlgH family.</text>
</comment>
<keyword id="KW-0975">Bacterial flagellum</keyword>
<keyword id="KW-0998">Cell outer membrane</keyword>
<keyword id="KW-0449">Lipoprotein</keyword>
<keyword id="KW-0472">Membrane</keyword>
<keyword id="KW-0564">Palmitate</keyword>
<keyword id="KW-1185">Reference proteome</keyword>
<keyword id="KW-0732">Signal</keyword>
<name>FLGH_SHIDS</name>
<gene>
    <name evidence="1" type="primary">flgH</name>
    <name type="ordered locus">SDY_2072</name>
</gene>
<dbReference type="EMBL" id="CP000034">
    <property type="protein sequence ID" value="ABB62166.1"/>
    <property type="molecule type" value="Genomic_DNA"/>
</dbReference>
<dbReference type="RefSeq" id="WP_011378771.1">
    <property type="nucleotide sequence ID" value="NC_007606.1"/>
</dbReference>
<dbReference type="RefSeq" id="YP_403657.1">
    <property type="nucleotide sequence ID" value="NC_007606.1"/>
</dbReference>
<dbReference type="SMR" id="Q32ET9"/>
<dbReference type="STRING" id="300267.SDY_2072"/>
<dbReference type="EnsemblBacteria" id="ABB62166">
    <property type="protein sequence ID" value="ABB62166"/>
    <property type="gene ID" value="SDY_2072"/>
</dbReference>
<dbReference type="KEGG" id="sdy:SDY_2072"/>
<dbReference type="PATRIC" id="fig|300267.13.peg.2488"/>
<dbReference type="HOGENOM" id="CLU_069313_0_0_6"/>
<dbReference type="Proteomes" id="UP000002716">
    <property type="component" value="Chromosome"/>
</dbReference>
<dbReference type="GO" id="GO:0009427">
    <property type="term" value="C:bacterial-type flagellum basal body, distal rod, L ring"/>
    <property type="evidence" value="ECO:0007669"/>
    <property type="project" value="InterPro"/>
</dbReference>
<dbReference type="GO" id="GO:0009279">
    <property type="term" value="C:cell outer membrane"/>
    <property type="evidence" value="ECO:0007669"/>
    <property type="project" value="UniProtKB-SubCell"/>
</dbReference>
<dbReference type="GO" id="GO:0003774">
    <property type="term" value="F:cytoskeletal motor activity"/>
    <property type="evidence" value="ECO:0007669"/>
    <property type="project" value="InterPro"/>
</dbReference>
<dbReference type="GO" id="GO:0071973">
    <property type="term" value="P:bacterial-type flagellum-dependent cell motility"/>
    <property type="evidence" value="ECO:0007669"/>
    <property type="project" value="InterPro"/>
</dbReference>
<dbReference type="HAMAP" id="MF_00415">
    <property type="entry name" value="FlgH"/>
    <property type="match status" value="1"/>
</dbReference>
<dbReference type="InterPro" id="IPR000527">
    <property type="entry name" value="Flag_Lring"/>
</dbReference>
<dbReference type="NCBIfam" id="NF001301">
    <property type="entry name" value="PRK00249.1-1"/>
    <property type="match status" value="1"/>
</dbReference>
<dbReference type="PANTHER" id="PTHR34933">
    <property type="entry name" value="FLAGELLAR L-RING PROTEIN"/>
    <property type="match status" value="1"/>
</dbReference>
<dbReference type="PANTHER" id="PTHR34933:SF3">
    <property type="entry name" value="FLAGELLAR L-RING PROTEIN"/>
    <property type="match status" value="1"/>
</dbReference>
<dbReference type="Pfam" id="PF02107">
    <property type="entry name" value="FlgH"/>
    <property type="match status" value="1"/>
</dbReference>
<dbReference type="PRINTS" id="PR01008">
    <property type="entry name" value="FLGLRINGFLGH"/>
</dbReference>
<dbReference type="PROSITE" id="PS51257">
    <property type="entry name" value="PROKAR_LIPOPROTEIN"/>
    <property type="match status" value="1"/>
</dbReference>
<organism>
    <name type="scientific">Shigella dysenteriae serotype 1 (strain Sd197)</name>
    <dbReference type="NCBI Taxonomy" id="300267"/>
    <lineage>
        <taxon>Bacteria</taxon>
        <taxon>Pseudomonadati</taxon>
        <taxon>Pseudomonadota</taxon>
        <taxon>Gammaproteobacteria</taxon>
        <taxon>Enterobacterales</taxon>
        <taxon>Enterobacteriaceae</taxon>
        <taxon>Shigella</taxon>
    </lineage>
</organism>